<accession>B6DCT4</accession>
<evidence type="ECO:0000250" key="1"/>
<evidence type="ECO:0000250" key="2">
    <source>
        <dbReference type="UniProtKB" id="B3EWH0"/>
    </source>
</evidence>
<evidence type="ECO:0000255" key="3"/>
<evidence type="ECO:0000305" key="4"/>
<evidence type="ECO:0000305" key="5">
    <source>
    </source>
</evidence>
<sequence>MKVLVLFSVLFLTLFSYSSTEAIDEFDSDAEDDMLSLMANEQVRAKACTPRLHDCSHDRHSCCRGELSKDVCYCFYPEGEDKTEVCSCQQPKSHKYIEKVVDKAKTVVG</sequence>
<dbReference type="EMBL" id="EU926018">
    <property type="protein sequence ID" value="ACI41350.1"/>
    <property type="molecule type" value="mRNA"/>
</dbReference>
<dbReference type="EMBL" id="FM864022">
    <property type="protein sequence ID" value="CAS03620.1"/>
    <property type="molecule type" value="mRNA"/>
</dbReference>
<dbReference type="SMR" id="B6DCT4"/>
<dbReference type="ArachnoServer" id="AS000967">
    <property type="toxin name" value="U4-lycotoxin-Ls1b"/>
</dbReference>
<dbReference type="GO" id="GO:0005576">
    <property type="term" value="C:extracellular region"/>
    <property type="evidence" value="ECO:0007669"/>
    <property type="project" value="UniProtKB-SubCell"/>
</dbReference>
<dbReference type="GO" id="GO:0005246">
    <property type="term" value="F:calcium channel regulator activity"/>
    <property type="evidence" value="ECO:0007669"/>
    <property type="project" value="UniProtKB-KW"/>
</dbReference>
<dbReference type="GO" id="GO:0090729">
    <property type="term" value="F:toxin activity"/>
    <property type="evidence" value="ECO:0007669"/>
    <property type="project" value="UniProtKB-KW"/>
</dbReference>
<dbReference type="InterPro" id="IPR019553">
    <property type="entry name" value="Spider_toxin_CSTX_knottin"/>
</dbReference>
<dbReference type="InterPro" id="IPR011142">
    <property type="entry name" value="Spider_toxin_CSTX_Knottin_CS"/>
</dbReference>
<dbReference type="Pfam" id="PF10530">
    <property type="entry name" value="Toxin_35"/>
    <property type="match status" value="1"/>
</dbReference>
<dbReference type="PROSITE" id="PS60029">
    <property type="entry name" value="SPIDER_CSTX"/>
    <property type="match status" value="1"/>
</dbReference>
<organism>
    <name type="scientific">Lycosa singoriensis</name>
    <name type="common">Wolf spider</name>
    <name type="synonym">Aranea singoriensis</name>
    <dbReference type="NCBI Taxonomy" id="434756"/>
    <lineage>
        <taxon>Eukaryota</taxon>
        <taxon>Metazoa</taxon>
        <taxon>Ecdysozoa</taxon>
        <taxon>Arthropoda</taxon>
        <taxon>Chelicerata</taxon>
        <taxon>Arachnida</taxon>
        <taxon>Araneae</taxon>
        <taxon>Araneomorphae</taxon>
        <taxon>Entelegynae</taxon>
        <taxon>Lycosoidea</taxon>
        <taxon>Lycosidae</taxon>
        <taxon>Lycosa</taxon>
    </lineage>
</organism>
<proteinExistence type="inferred from homology"/>
<keyword id="KW-0108">Calcium channel impairing toxin</keyword>
<keyword id="KW-1015">Disulfide bond</keyword>
<keyword id="KW-0872">Ion channel impairing toxin</keyword>
<keyword id="KW-0960">Knottin</keyword>
<keyword id="KW-0964">Secreted</keyword>
<keyword id="KW-0732">Signal</keyword>
<keyword id="KW-0800">Toxin</keyword>
<reference key="1">
    <citation type="journal article" date="2010" name="Zoology">
        <title>Transcriptome analysis of the venom glands of the Chinese wolf spider Lycosa singoriensis.</title>
        <authorList>
            <person name="Zhang Y."/>
            <person name="Chen J."/>
            <person name="Tang X."/>
            <person name="Wang F."/>
            <person name="Jiang L."/>
            <person name="Xiong X."/>
            <person name="Wang M."/>
            <person name="Rong M."/>
            <person name="Liu Z."/>
            <person name="Liang S."/>
        </authorList>
    </citation>
    <scope>NUCLEOTIDE SEQUENCE [LARGE SCALE MRNA]</scope>
    <source>
        <tissue>Venom gland</tissue>
    </source>
</reference>
<feature type="signal peptide" evidence="3">
    <location>
        <begin position="1"/>
        <end position="22"/>
    </location>
</feature>
<feature type="propeptide" id="PRO_0000401681" evidence="1">
    <location>
        <begin position="23"/>
        <end position="44"/>
    </location>
</feature>
<feature type="chain" id="PRO_0000401682" description="U4-lycotoxin-Ls1b">
    <location>
        <begin position="45"/>
        <end position="109"/>
    </location>
</feature>
<feature type="region of interest" description="Knottin domain" evidence="2">
    <location>
        <begin position="45"/>
        <end position="88"/>
    </location>
</feature>
<feature type="region of interest" description="Linear cationic cytotoxin domain" evidence="2">
    <location>
        <begin position="89"/>
        <end position="108"/>
    </location>
</feature>
<feature type="disulfide bond" evidence="2">
    <location>
        <begin position="48"/>
        <end position="63"/>
    </location>
</feature>
<feature type="disulfide bond" evidence="2">
    <location>
        <begin position="55"/>
        <end position="72"/>
    </location>
</feature>
<feature type="disulfide bond" evidence="2">
    <location>
        <begin position="62"/>
        <end position="88"/>
    </location>
</feature>
<feature type="disulfide bond" evidence="2">
    <location>
        <begin position="74"/>
        <end position="86"/>
    </location>
</feature>
<name>TX402_LYCSI</name>
<protein>
    <recommendedName>
        <fullName evidence="4">U4-lycotoxin-Ls1b</fullName>
        <shortName evidence="4">U4-LCTX-Ls1b</shortName>
    </recommendedName>
    <alternativeName>
        <fullName>Toxin-like structure LSTX-C2</fullName>
    </alternativeName>
</protein>
<comment type="function">
    <text evidence="2">Enhances the high-affinity desensitization of human P2RX3 purinoceptors.</text>
</comment>
<comment type="subcellular location">
    <subcellularLocation>
        <location evidence="1">Secreted</location>
    </subcellularLocation>
</comment>
<comment type="tissue specificity">
    <text evidence="5">Expressed by the venom gland.</text>
</comment>
<comment type="domain">
    <text evidence="2">The toxin is composed of 2 domains: a highly rigid N-terminal inhibitor cystine knot (knottin) domain and a rather flexible C-terminal linear cationic cytotoxin domain that forms amphiphilic alpha-helices.</text>
</comment>
<comment type="domain">
    <text evidence="2">The presence of a 'disulfide through disulfide knot' structurally defines this protein as a knottin.</text>
</comment>
<comment type="similarity">
    <text evidence="4">Belongs to the neurotoxin 19 (CSTX) family. 05 (U4-Lctx) subfamily.</text>
</comment>